<evidence type="ECO:0000255" key="1">
    <source>
        <dbReference type="HAMAP-Rule" id="MF_00369"/>
    </source>
</evidence>
<evidence type="ECO:0000256" key="2">
    <source>
        <dbReference type="SAM" id="MobiDB-lite"/>
    </source>
</evidence>
<evidence type="ECO:0000305" key="3"/>
<comment type="similarity">
    <text evidence="1">Belongs to the eukaryotic ribosomal protein eL21 family.</text>
</comment>
<organism>
    <name type="scientific">Saccharolobus islandicus (strain Y.N.15.51 / Yellowstone #2)</name>
    <name type="common">Sulfolobus islandicus</name>
    <dbReference type="NCBI Taxonomy" id="419942"/>
    <lineage>
        <taxon>Archaea</taxon>
        <taxon>Thermoproteota</taxon>
        <taxon>Thermoprotei</taxon>
        <taxon>Sulfolobales</taxon>
        <taxon>Sulfolobaceae</taxon>
        <taxon>Saccharolobus</taxon>
    </lineage>
</organism>
<keyword id="KW-0687">Ribonucleoprotein</keyword>
<keyword id="KW-0689">Ribosomal protein</keyword>
<protein>
    <recommendedName>
        <fullName evidence="1">Large ribosomal subunit protein eL21</fullName>
    </recommendedName>
    <alternativeName>
        <fullName evidence="3">50S ribosomal protein L21e</fullName>
    </alternativeName>
</protein>
<name>RL21_SACI1</name>
<reference key="1">
    <citation type="journal article" date="2009" name="Proc. Natl. Acad. Sci. U.S.A.">
        <title>Biogeography of the Sulfolobus islandicus pan-genome.</title>
        <authorList>
            <person name="Reno M.L."/>
            <person name="Held N.L."/>
            <person name="Fields C.J."/>
            <person name="Burke P.V."/>
            <person name="Whitaker R.J."/>
        </authorList>
    </citation>
    <scope>NUCLEOTIDE SEQUENCE [LARGE SCALE GENOMIC DNA]</scope>
    <source>
        <strain>Y.N.15.51 / Yellowstone #2</strain>
    </source>
</reference>
<proteinExistence type="inferred from homology"/>
<feature type="chain" id="PRO_1000205577" description="Large ribosomal subunit protein eL21">
    <location>
        <begin position="1"/>
        <end position="101"/>
    </location>
</feature>
<feature type="region of interest" description="Disordered" evidence="2">
    <location>
        <begin position="1"/>
        <end position="23"/>
    </location>
</feature>
<feature type="compositionally biased region" description="Basic residues" evidence="2">
    <location>
        <begin position="1"/>
        <end position="18"/>
    </location>
</feature>
<dbReference type="EMBL" id="CP001404">
    <property type="protein sequence ID" value="ACP48549.1"/>
    <property type="molecule type" value="Genomic_DNA"/>
</dbReference>
<dbReference type="RefSeq" id="WP_012711388.1">
    <property type="nucleotide sequence ID" value="NC_012623.1"/>
</dbReference>
<dbReference type="SMR" id="C3NHD9"/>
<dbReference type="KEGG" id="sin:YN1551_1458"/>
<dbReference type="HOGENOM" id="CLU_103610_1_1_2"/>
<dbReference type="Proteomes" id="UP000006818">
    <property type="component" value="Chromosome"/>
</dbReference>
<dbReference type="GO" id="GO:1990904">
    <property type="term" value="C:ribonucleoprotein complex"/>
    <property type="evidence" value="ECO:0007669"/>
    <property type="project" value="UniProtKB-KW"/>
</dbReference>
<dbReference type="GO" id="GO:0005840">
    <property type="term" value="C:ribosome"/>
    <property type="evidence" value="ECO:0007669"/>
    <property type="project" value="UniProtKB-KW"/>
</dbReference>
<dbReference type="GO" id="GO:0003735">
    <property type="term" value="F:structural constituent of ribosome"/>
    <property type="evidence" value="ECO:0007669"/>
    <property type="project" value="InterPro"/>
</dbReference>
<dbReference type="GO" id="GO:0006412">
    <property type="term" value="P:translation"/>
    <property type="evidence" value="ECO:0007669"/>
    <property type="project" value="UniProtKB-UniRule"/>
</dbReference>
<dbReference type="FunFam" id="2.30.30.70:FF:000001">
    <property type="entry name" value="60S ribosomal protein L21"/>
    <property type="match status" value="1"/>
</dbReference>
<dbReference type="Gene3D" id="2.30.30.70">
    <property type="entry name" value="Ribosomal protein L21"/>
    <property type="match status" value="1"/>
</dbReference>
<dbReference type="HAMAP" id="MF_00369">
    <property type="entry name" value="Ribosomal_eL21"/>
    <property type="match status" value="1"/>
</dbReference>
<dbReference type="InterPro" id="IPR001147">
    <property type="entry name" value="Ribosomal_eL21"/>
</dbReference>
<dbReference type="InterPro" id="IPR022856">
    <property type="entry name" value="Ribosomal_eL21_arc"/>
</dbReference>
<dbReference type="InterPro" id="IPR018259">
    <property type="entry name" value="Ribosomal_eL21_CS"/>
</dbReference>
<dbReference type="InterPro" id="IPR036948">
    <property type="entry name" value="Ribosomal_eL21_sf"/>
</dbReference>
<dbReference type="InterPro" id="IPR008991">
    <property type="entry name" value="Translation_prot_SH3-like_sf"/>
</dbReference>
<dbReference type="NCBIfam" id="NF003303">
    <property type="entry name" value="PRK04306.1"/>
    <property type="match status" value="1"/>
</dbReference>
<dbReference type="PANTHER" id="PTHR20981">
    <property type="entry name" value="60S RIBOSOMAL PROTEIN L21"/>
    <property type="match status" value="1"/>
</dbReference>
<dbReference type="Pfam" id="PF01157">
    <property type="entry name" value="Ribosomal_L21e"/>
    <property type="match status" value="1"/>
</dbReference>
<dbReference type="SUPFAM" id="SSF50104">
    <property type="entry name" value="Translation proteins SH3-like domain"/>
    <property type="match status" value="1"/>
</dbReference>
<dbReference type="PROSITE" id="PS01171">
    <property type="entry name" value="RIBOSOMAL_L21E"/>
    <property type="match status" value="1"/>
</dbReference>
<sequence>MVKHSRGYRTRSRSLLRKSPRERGAVPSLSRLMVEYKEGDKVVIKINPSVHSGMPHRRYQGKVGKIIGKRGRAYLVSVTLGDKEKVIIVRPEHLVSFSSSG</sequence>
<gene>
    <name evidence="1" type="primary">rpl21e</name>
    <name type="ordered locus">YN1551_1458</name>
</gene>
<accession>C3NHD9</accession>